<evidence type="ECO:0000255" key="1">
    <source>
        <dbReference type="HAMAP-Rule" id="MF_01077"/>
    </source>
</evidence>
<evidence type="ECO:0000305" key="2"/>
<protein>
    <recommendedName>
        <fullName evidence="1">Ribosome maturation factor RimP</fullName>
    </recommendedName>
</protein>
<reference key="1">
    <citation type="submission" date="2006-05" db="EMBL/GenBank/DDBJ databases">
        <authorList>
            <consortium name="Genoscope"/>
        </authorList>
    </citation>
    <scope>NUCLEOTIDE SEQUENCE [LARGE SCALE GENOMIC DNA]</scope>
    <source>
        <strain>RCC307</strain>
    </source>
</reference>
<sequence>MAHPPLEPIEALASATAQSLGFLMESVVLHSHRAPQALIVAVRKGDGSDVNLDDCASFSQAFGEALETGELLTGAYVLEITSPGLGDVLQQDRDFRSFRGFPVCVRQRDAKGGEIQREGTLLGRDADAVELNLRGRIQRIPRSDVLEVRLTSPSA</sequence>
<gene>
    <name evidence="1" type="primary">rimP</name>
    <name type="ordered locus">SynRCC307_1967</name>
</gene>
<proteinExistence type="inferred from homology"/>
<name>RIMP_SYNR3</name>
<comment type="function">
    <text evidence="1">Required for maturation of 30S ribosomal subunits.</text>
</comment>
<comment type="subcellular location">
    <subcellularLocation>
        <location evidence="1">Cytoplasm</location>
    </subcellularLocation>
</comment>
<comment type="similarity">
    <text evidence="1">Belongs to the RimP family.</text>
</comment>
<comment type="sequence caution" evidence="2">
    <conflict type="erroneous initiation">
        <sequence resource="EMBL-CDS" id="CAK28870"/>
    </conflict>
</comment>
<keyword id="KW-0963">Cytoplasm</keyword>
<keyword id="KW-1185">Reference proteome</keyword>
<keyword id="KW-0690">Ribosome biogenesis</keyword>
<feature type="chain" id="PRO_0000384793" description="Ribosome maturation factor RimP">
    <location>
        <begin position="1"/>
        <end position="155"/>
    </location>
</feature>
<accession>A5GVG1</accession>
<dbReference type="EMBL" id="CT978603">
    <property type="protein sequence ID" value="CAK28870.1"/>
    <property type="status" value="ALT_INIT"/>
    <property type="molecule type" value="Genomic_DNA"/>
</dbReference>
<dbReference type="SMR" id="A5GVG1"/>
<dbReference type="STRING" id="316278.SynRCC307_1967"/>
<dbReference type="KEGG" id="syr:SynRCC307_1967"/>
<dbReference type="eggNOG" id="COG0779">
    <property type="taxonomic scope" value="Bacteria"/>
</dbReference>
<dbReference type="HOGENOM" id="CLU_070525_2_1_3"/>
<dbReference type="OrthoDB" id="9805006at2"/>
<dbReference type="Proteomes" id="UP000001115">
    <property type="component" value="Chromosome"/>
</dbReference>
<dbReference type="GO" id="GO:0005829">
    <property type="term" value="C:cytosol"/>
    <property type="evidence" value="ECO:0007669"/>
    <property type="project" value="TreeGrafter"/>
</dbReference>
<dbReference type="GO" id="GO:0000028">
    <property type="term" value="P:ribosomal small subunit assembly"/>
    <property type="evidence" value="ECO:0007669"/>
    <property type="project" value="TreeGrafter"/>
</dbReference>
<dbReference type="GO" id="GO:0006412">
    <property type="term" value="P:translation"/>
    <property type="evidence" value="ECO:0007669"/>
    <property type="project" value="TreeGrafter"/>
</dbReference>
<dbReference type="Gene3D" id="3.30.300.70">
    <property type="entry name" value="RimP-like superfamily, N-terminal"/>
    <property type="match status" value="1"/>
</dbReference>
<dbReference type="HAMAP" id="MF_01077">
    <property type="entry name" value="RimP"/>
    <property type="match status" value="1"/>
</dbReference>
<dbReference type="InterPro" id="IPR003728">
    <property type="entry name" value="Ribosome_maturation_RimP"/>
</dbReference>
<dbReference type="InterPro" id="IPR036847">
    <property type="entry name" value="RimP_C_sf"/>
</dbReference>
<dbReference type="InterPro" id="IPR028989">
    <property type="entry name" value="RimP_N"/>
</dbReference>
<dbReference type="InterPro" id="IPR035956">
    <property type="entry name" value="RimP_N_sf"/>
</dbReference>
<dbReference type="PANTHER" id="PTHR33867">
    <property type="entry name" value="RIBOSOME MATURATION FACTOR RIMP"/>
    <property type="match status" value="1"/>
</dbReference>
<dbReference type="PANTHER" id="PTHR33867:SF1">
    <property type="entry name" value="RIBOSOME MATURATION FACTOR RIMP"/>
    <property type="match status" value="1"/>
</dbReference>
<dbReference type="Pfam" id="PF02576">
    <property type="entry name" value="RimP_N"/>
    <property type="match status" value="1"/>
</dbReference>
<dbReference type="SUPFAM" id="SSF74942">
    <property type="entry name" value="YhbC-like, C-terminal domain"/>
    <property type="match status" value="1"/>
</dbReference>
<dbReference type="SUPFAM" id="SSF75420">
    <property type="entry name" value="YhbC-like, N-terminal domain"/>
    <property type="match status" value="1"/>
</dbReference>
<organism>
    <name type="scientific">Synechococcus sp. (strain RCC307)</name>
    <dbReference type="NCBI Taxonomy" id="316278"/>
    <lineage>
        <taxon>Bacteria</taxon>
        <taxon>Bacillati</taxon>
        <taxon>Cyanobacteriota</taxon>
        <taxon>Cyanophyceae</taxon>
        <taxon>Synechococcales</taxon>
        <taxon>Synechococcaceae</taxon>
        <taxon>Synechococcus</taxon>
    </lineage>
</organism>